<organism>
    <name type="scientific">Mus musculus</name>
    <name type="common">Mouse</name>
    <dbReference type="NCBI Taxonomy" id="10090"/>
    <lineage>
        <taxon>Eukaryota</taxon>
        <taxon>Metazoa</taxon>
        <taxon>Chordata</taxon>
        <taxon>Craniata</taxon>
        <taxon>Vertebrata</taxon>
        <taxon>Euteleostomi</taxon>
        <taxon>Mammalia</taxon>
        <taxon>Eutheria</taxon>
        <taxon>Euarchontoglires</taxon>
        <taxon>Glires</taxon>
        <taxon>Rodentia</taxon>
        <taxon>Myomorpha</taxon>
        <taxon>Muroidea</taxon>
        <taxon>Muridae</taxon>
        <taxon>Murinae</taxon>
        <taxon>Mus</taxon>
        <taxon>Mus</taxon>
    </lineage>
</organism>
<proteinExistence type="evidence at protein level"/>
<dbReference type="EMBL" id="AK156053">
    <property type="protein sequence ID" value="BAE33563.1"/>
    <property type="molecule type" value="mRNA"/>
</dbReference>
<dbReference type="EMBL" id="AC162171">
    <property type="status" value="NOT_ANNOTATED_CDS"/>
    <property type="molecule type" value="Genomic_DNA"/>
</dbReference>
<dbReference type="EMBL" id="CH466617">
    <property type="protein sequence ID" value="EDL05329.1"/>
    <property type="molecule type" value="Genomic_DNA"/>
</dbReference>
<dbReference type="EMBL" id="BC021612">
    <property type="protein sequence ID" value="AAH21612.1"/>
    <property type="status" value="ALT_SEQ"/>
    <property type="molecule type" value="mRNA"/>
</dbReference>
<dbReference type="EMBL" id="BC138972">
    <property type="protein sequence ID" value="AAI38973.1"/>
    <property type="molecule type" value="mRNA"/>
</dbReference>
<dbReference type="EMBL" id="BC145728">
    <property type="protein sequence ID" value="AAI45729.1"/>
    <property type="molecule type" value="mRNA"/>
</dbReference>
<dbReference type="CCDS" id="CCDS19411.1"/>
<dbReference type="RefSeq" id="NP_001028482.2">
    <property type="nucleotide sequence ID" value="NM_001033310.4"/>
</dbReference>
<dbReference type="FunCoup" id="Q8VC74">
    <property type="interactions" value="1597"/>
</dbReference>
<dbReference type="STRING" id="10090.ENSMUSP00000113353"/>
<dbReference type="GlyGen" id="Q8VC74">
    <property type="glycosylation" value="1 site, 1 O-linked glycan (1 site)"/>
</dbReference>
<dbReference type="iPTMnet" id="Q8VC74"/>
<dbReference type="PhosphoSitePlus" id="Q8VC74"/>
<dbReference type="SwissPalm" id="Q8VC74"/>
<dbReference type="PaxDb" id="10090-ENSMUSP00000113353"/>
<dbReference type="ProteomicsDB" id="285255"/>
<dbReference type="Pumba" id="Q8VC74"/>
<dbReference type="Antibodypedia" id="44370">
    <property type="antibodies" value="83 antibodies from 21 providers"/>
</dbReference>
<dbReference type="DNASU" id="231430"/>
<dbReference type="Ensembl" id="ENSMUST00000048363.10">
    <property type="protein sequence ID" value="ENSMUSP00000044144.8"/>
    <property type="gene ID" value="ENSMUSG00000035505.15"/>
</dbReference>
<dbReference type="GeneID" id="231430"/>
<dbReference type="KEGG" id="mmu:231430"/>
<dbReference type="UCSC" id="uc008yar.2">
    <property type="organism name" value="mouse"/>
</dbReference>
<dbReference type="AGR" id="MGI:2448532"/>
<dbReference type="CTD" id="285521"/>
<dbReference type="MGI" id="MGI:2448532">
    <property type="gene designation" value="Cox18"/>
</dbReference>
<dbReference type="VEuPathDB" id="HostDB:ENSMUSG00000035505"/>
<dbReference type="eggNOG" id="KOG1239">
    <property type="taxonomic scope" value="Eukaryota"/>
</dbReference>
<dbReference type="GeneTree" id="ENSGT00530000063506"/>
<dbReference type="HOGENOM" id="CLU_029282_2_0_1"/>
<dbReference type="InParanoid" id="Q8VC74"/>
<dbReference type="OrthoDB" id="2148490at2759"/>
<dbReference type="Reactome" id="R-MMU-9864848">
    <property type="pathway name" value="Complex IV assembly"/>
</dbReference>
<dbReference type="BioGRID-ORCS" id="231430">
    <property type="hits" value="13 hits in 77 CRISPR screens"/>
</dbReference>
<dbReference type="PRO" id="PR:Q8VC74"/>
<dbReference type="Proteomes" id="UP000000589">
    <property type="component" value="Chromosome 5"/>
</dbReference>
<dbReference type="RNAct" id="Q8VC74">
    <property type="molecule type" value="protein"/>
</dbReference>
<dbReference type="Bgee" id="ENSMUSG00000035505">
    <property type="expression patterns" value="Expressed in metanephric loop of Henle and 247 other cell types or tissues"/>
</dbReference>
<dbReference type="ExpressionAtlas" id="Q8VC74">
    <property type="expression patterns" value="baseline and differential"/>
</dbReference>
<dbReference type="GO" id="GO:0005743">
    <property type="term" value="C:mitochondrial inner membrane"/>
    <property type="evidence" value="ECO:0000250"/>
    <property type="project" value="UniProtKB"/>
</dbReference>
<dbReference type="GO" id="GO:0005739">
    <property type="term" value="C:mitochondrion"/>
    <property type="evidence" value="ECO:0007005"/>
    <property type="project" value="MGI"/>
</dbReference>
<dbReference type="GO" id="GO:0032977">
    <property type="term" value="F:membrane insertase activity"/>
    <property type="evidence" value="ECO:0000250"/>
    <property type="project" value="UniProtKB"/>
</dbReference>
<dbReference type="GO" id="GO:0033617">
    <property type="term" value="P:mitochondrial cytochrome c oxidase assembly"/>
    <property type="evidence" value="ECO:0000250"/>
    <property type="project" value="UniProtKB"/>
</dbReference>
<dbReference type="GO" id="GO:0032979">
    <property type="term" value="P:protein insertion into mitochondrial inner membrane from matrix"/>
    <property type="evidence" value="ECO:0000250"/>
    <property type="project" value="UniProtKB"/>
</dbReference>
<dbReference type="GO" id="GO:0051204">
    <property type="term" value="P:protein insertion into mitochondrial membrane"/>
    <property type="evidence" value="ECO:0000250"/>
    <property type="project" value="UniProtKB"/>
</dbReference>
<dbReference type="GO" id="GO:0008535">
    <property type="term" value="P:respiratory chain complex IV assembly"/>
    <property type="evidence" value="ECO:0000250"/>
    <property type="project" value="UniProtKB"/>
</dbReference>
<dbReference type="CDD" id="cd20069">
    <property type="entry name" value="5TM_Oxa1-like"/>
    <property type="match status" value="1"/>
</dbReference>
<dbReference type="InterPro" id="IPR001708">
    <property type="entry name" value="YidC/ALB3/OXA1/COX18"/>
</dbReference>
<dbReference type="InterPro" id="IPR028055">
    <property type="entry name" value="YidC/Oxa/ALB_C"/>
</dbReference>
<dbReference type="PANTHER" id="PTHR12428:SF65">
    <property type="entry name" value="CYTOCHROME C OXIDASE ASSEMBLY PROTEIN COX18, MITOCHONDRIAL"/>
    <property type="match status" value="1"/>
</dbReference>
<dbReference type="PANTHER" id="PTHR12428">
    <property type="entry name" value="OXA1"/>
    <property type="match status" value="1"/>
</dbReference>
<dbReference type="Pfam" id="PF02096">
    <property type="entry name" value="60KD_IMP"/>
    <property type="match status" value="1"/>
</dbReference>
<comment type="function">
    <text evidence="1">Mitochondrial membrane insertase required for the translocation of the C-terminus of cytochrome c oxidase subunit II (MT-CO2/COX2) across the mitochondrial inner membrane. Plays a role in MT-CO2/COX2 maturation following the COX20-mediated stabilization of newly synthesized MT-CO2/COX2 protein and before the action of the metallochaperones SCO1/2. Essential for the assembly and stability of the mitochondrial respiratory chain complex IV (also known as cytochrome c oxidase).</text>
</comment>
<comment type="subunit">
    <text evidence="1">Found in a complex with TMEM177, COA6, MT-CO2/COX2, COX20, SCO1 and SCO2. Interacts transiently with MT-CO2/COX2 during its maturation. Interacts with COX20 in a MT-CO2/COX2-dependent manner.</text>
</comment>
<comment type="subcellular location">
    <subcellularLocation>
        <location evidence="1">Mitochondrion inner membrane</location>
        <topology evidence="2">Multi-pass membrane protein</topology>
    </subcellularLocation>
</comment>
<comment type="similarity">
    <text evidence="3">Belongs to the OXA1/ALB3/YidC family.</text>
</comment>
<comment type="sequence caution" evidence="3">
    <conflict type="miscellaneous discrepancy">
        <sequence resource="EMBL-CDS" id="AAH21612"/>
    </conflict>
    <text>Contaminating sequence. Sequence of unknown origin in the N-terminal part.</text>
</comment>
<keyword id="KW-0472">Membrane</keyword>
<keyword id="KW-0496">Mitochondrion</keyword>
<keyword id="KW-0999">Mitochondrion inner membrane</keyword>
<keyword id="KW-1185">Reference proteome</keyword>
<keyword id="KW-0809">Transit peptide</keyword>
<keyword id="KW-0812">Transmembrane</keyword>
<keyword id="KW-1133">Transmembrane helix</keyword>
<protein>
    <recommendedName>
        <fullName>Cytochrome c oxidase assembly protein COX18, mitochondrial</fullName>
    </recommendedName>
</protein>
<feature type="transit peptide" description="Mitochondrion" evidence="2">
    <location>
        <begin position="1"/>
        <end position="63"/>
    </location>
</feature>
<feature type="chain" id="PRO_0000043327" description="Cytochrome c oxidase assembly protein COX18, mitochondrial">
    <location>
        <begin position="64"/>
        <end position="331"/>
    </location>
</feature>
<feature type="topological domain" description="Mitochondrial intermembrane" evidence="3">
    <location>
        <begin position="64"/>
        <end position="164"/>
    </location>
</feature>
<feature type="transmembrane region" description="Helical" evidence="2">
    <location>
        <begin position="165"/>
        <end position="185"/>
    </location>
</feature>
<feature type="topological domain" description="Mitochondrial matrix" evidence="3">
    <location>
        <begin position="186"/>
        <end position="220"/>
    </location>
</feature>
<feature type="transmembrane region" description="Helical" evidence="2">
    <location>
        <begin position="221"/>
        <end position="241"/>
    </location>
</feature>
<feature type="topological domain" description="Mitochondrial intermembrane" evidence="3">
    <location>
        <begin position="242"/>
        <end position="259"/>
    </location>
</feature>
<feature type="transmembrane region" description="Helical" evidence="2">
    <location>
        <begin position="260"/>
        <end position="280"/>
    </location>
</feature>
<feature type="topological domain" description="Mitochondrial matrix" evidence="3">
    <location>
        <begin position="281"/>
        <end position="331"/>
    </location>
</feature>
<feature type="sequence conflict" description="In Ref. 1; BAE33563 and 4; AAI38973/AAI45729." evidence="3" ref="1 4">
    <original>G</original>
    <variation>R</variation>
    <location>
        <position position="22"/>
    </location>
</feature>
<feature type="sequence conflict" description="In Ref. 1; BAE33563 and 4; AAH21612/AAI38973/AAI45729." evidence="3" ref="1 4">
    <original>I</original>
    <variation>V</variation>
    <location>
        <position position="153"/>
    </location>
</feature>
<feature type="sequence conflict" description="In Ref. 1; BAE33563 and 4; AAH21612/AAI38973/AAI45729." evidence="3" ref="1 4">
    <original>Y</original>
    <variation>H</variation>
    <location>
        <position position="252"/>
    </location>
</feature>
<name>COX18_MOUSE</name>
<sequence>MLCRSCAGWLRSLPTLRLPAPGSPPAWSSARLPALPVWAAASVSAASPGGWYEALAASAPVRTAEEVLLGAQEATGLPWWSNIILSTVALRGAVTLPLAAYQHYILAKVENLQPEIKDIAKRLNQEVAVCARQFGWSKRVARLTYLKNMRRLISELYVRDNCHPFKATVLVWVQLPMWVFISVALRNLSTGATHSDGISVQEQLAAGGTLWFPDLTAVDSTWILPVSVGVVNLLIVEIFALQKIGTSRFQMYVTNFVRAVSVLMIPVAATVPSALVLYWLCSSLMGLAQNLLLRSPGFRQLCRIPPSKSDSETPYRDLSAAFCAKFLSRKR</sequence>
<reference key="1">
    <citation type="journal article" date="2005" name="Science">
        <title>The transcriptional landscape of the mammalian genome.</title>
        <authorList>
            <person name="Carninci P."/>
            <person name="Kasukawa T."/>
            <person name="Katayama S."/>
            <person name="Gough J."/>
            <person name="Frith M.C."/>
            <person name="Maeda N."/>
            <person name="Oyama R."/>
            <person name="Ravasi T."/>
            <person name="Lenhard B."/>
            <person name="Wells C."/>
            <person name="Kodzius R."/>
            <person name="Shimokawa K."/>
            <person name="Bajic V.B."/>
            <person name="Brenner S.E."/>
            <person name="Batalov S."/>
            <person name="Forrest A.R."/>
            <person name="Zavolan M."/>
            <person name="Davis M.J."/>
            <person name="Wilming L.G."/>
            <person name="Aidinis V."/>
            <person name="Allen J.E."/>
            <person name="Ambesi-Impiombato A."/>
            <person name="Apweiler R."/>
            <person name="Aturaliya R.N."/>
            <person name="Bailey T.L."/>
            <person name="Bansal M."/>
            <person name="Baxter L."/>
            <person name="Beisel K.W."/>
            <person name="Bersano T."/>
            <person name="Bono H."/>
            <person name="Chalk A.M."/>
            <person name="Chiu K.P."/>
            <person name="Choudhary V."/>
            <person name="Christoffels A."/>
            <person name="Clutterbuck D.R."/>
            <person name="Crowe M.L."/>
            <person name="Dalla E."/>
            <person name="Dalrymple B.P."/>
            <person name="de Bono B."/>
            <person name="Della Gatta G."/>
            <person name="di Bernardo D."/>
            <person name="Down T."/>
            <person name="Engstrom P."/>
            <person name="Fagiolini M."/>
            <person name="Faulkner G."/>
            <person name="Fletcher C.F."/>
            <person name="Fukushima T."/>
            <person name="Furuno M."/>
            <person name="Futaki S."/>
            <person name="Gariboldi M."/>
            <person name="Georgii-Hemming P."/>
            <person name="Gingeras T.R."/>
            <person name="Gojobori T."/>
            <person name="Green R.E."/>
            <person name="Gustincich S."/>
            <person name="Harbers M."/>
            <person name="Hayashi Y."/>
            <person name="Hensch T.K."/>
            <person name="Hirokawa N."/>
            <person name="Hill D."/>
            <person name="Huminiecki L."/>
            <person name="Iacono M."/>
            <person name="Ikeo K."/>
            <person name="Iwama A."/>
            <person name="Ishikawa T."/>
            <person name="Jakt M."/>
            <person name="Kanapin A."/>
            <person name="Katoh M."/>
            <person name="Kawasawa Y."/>
            <person name="Kelso J."/>
            <person name="Kitamura H."/>
            <person name="Kitano H."/>
            <person name="Kollias G."/>
            <person name="Krishnan S.P."/>
            <person name="Kruger A."/>
            <person name="Kummerfeld S.K."/>
            <person name="Kurochkin I.V."/>
            <person name="Lareau L.F."/>
            <person name="Lazarevic D."/>
            <person name="Lipovich L."/>
            <person name="Liu J."/>
            <person name="Liuni S."/>
            <person name="McWilliam S."/>
            <person name="Madan Babu M."/>
            <person name="Madera M."/>
            <person name="Marchionni L."/>
            <person name="Matsuda H."/>
            <person name="Matsuzawa S."/>
            <person name="Miki H."/>
            <person name="Mignone F."/>
            <person name="Miyake S."/>
            <person name="Morris K."/>
            <person name="Mottagui-Tabar S."/>
            <person name="Mulder N."/>
            <person name="Nakano N."/>
            <person name="Nakauchi H."/>
            <person name="Ng P."/>
            <person name="Nilsson R."/>
            <person name="Nishiguchi S."/>
            <person name="Nishikawa S."/>
            <person name="Nori F."/>
            <person name="Ohara O."/>
            <person name="Okazaki Y."/>
            <person name="Orlando V."/>
            <person name="Pang K.C."/>
            <person name="Pavan W.J."/>
            <person name="Pavesi G."/>
            <person name="Pesole G."/>
            <person name="Petrovsky N."/>
            <person name="Piazza S."/>
            <person name="Reed J."/>
            <person name="Reid J.F."/>
            <person name="Ring B.Z."/>
            <person name="Ringwald M."/>
            <person name="Rost B."/>
            <person name="Ruan Y."/>
            <person name="Salzberg S.L."/>
            <person name="Sandelin A."/>
            <person name="Schneider C."/>
            <person name="Schoenbach C."/>
            <person name="Sekiguchi K."/>
            <person name="Semple C.A."/>
            <person name="Seno S."/>
            <person name="Sessa L."/>
            <person name="Sheng Y."/>
            <person name="Shibata Y."/>
            <person name="Shimada H."/>
            <person name="Shimada K."/>
            <person name="Silva D."/>
            <person name="Sinclair B."/>
            <person name="Sperling S."/>
            <person name="Stupka E."/>
            <person name="Sugiura K."/>
            <person name="Sultana R."/>
            <person name="Takenaka Y."/>
            <person name="Taki K."/>
            <person name="Tammoja K."/>
            <person name="Tan S.L."/>
            <person name="Tang S."/>
            <person name="Taylor M.S."/>
            <person name="Tegner J."/>
            <person name="Teichmann S.A."/>
            <person name="Ueda H.R."/>
            <person name="van Nimwegen E."/>
            <person name="Verardo R."/>
            <person name="Wei C.L."/>
            <person name="Yagi K."/>
            <person name="Yamanishi H."/>
            <person name="Zabarovsky E."/>
            <person name="Zhu S."/>
            <person name="Zimmer A."/>
            <person name="Hide W."/>
            <person name="Bult C."/>
            <person name="Grimmond S.M."/>
            <person name="Teasdale R.D."/>
            <person name="Liu E.T."/>
            <person name="Brusic V."/>
            <person name="Quackenbush J."/>
            <person name="Wahlestedt C."/>
            <person name="Mattick J.S."/>
            <person name="Hume D.A."/>
            <person name="Kai C."/>
            <person name="Sasaki D."/>
            <person name="Tomaru Y."/>
            <person name="Fukuda S."/>
            <person name="Kanamori-Katayama M."/>
            <person name="Suzuki M."/>
            <person name="Aoki J."/>
            <person name="Arakawa T."/>
            <person name="Iida J."/>
            <person name="Imamura K."/>
            <person name="Itoh M."/>
            <person name="Kato T."/>
            <person name="Kawaji H."/>
            <person name="Kawagashira N."/>
            <person name="Kawashima T."/>
            <person name="Kojima M."/>
            <person name="Kondo S."/>
            <person name="Konno H."/>
            <person name="Nakano K."/>
            <person name="Ninomiya N."/>
            <person name="Nishio T."/>
            <person name="Okada M."/>
            <person name="Plessy C."/>
            <person name="Shibata K."/>
            <person name="Shiraki T."/>
            <person name="Suzuki S."/>
            <person name="Tagami M."/>
            <person name="Waki K."/>
            <person name="Watahiki A."/>
            <person name="Okamura-Oho Y."/>
            <person name="Suzuki H."/>
            <person name="Kawai J."/>
            <person name="Hayashizaki Y."/>
        </authorList>
    </citation>
    <scope>NUCLEOTIDE SEQUENCE [LARGE SCALE MRNA]</scope>
    <source>
        <strain>NOD</strain>
        <tissue>Spleen</tissue>
    </source>
</reference>
<reference key="2">
    <citation type="journal article" date="2009" name="PLoS Biol.">
        <title>Lineage-specific biology revealed by a finished genome assembly of the mouse.</title>
        <authorList>
            <person name="Church D.M."/>
            <person name="Goodstadt L."/>
            <person name="Hillier L.W."/>
            <person name="Zody M.C."/>
            <person name="Goldstein S."/>
            <person name="She X."/>
            <person name="Bult C.J."/>
            <person name="Agarwala R."/>
            <person name="Cherry J.L."/>
            <person name="DiCuccio M."/>
            <person name="Hlavina W."/>
            <person name="Kapustin Y."/>
            <person name="Meric P."/>
            <person name="Maglott D."/>
            <person name="Birtle Z."/>
            <person name="Marques A.C."/>
            <person name="Graves T."/>
            <person name="Zhou S."/>
            <person name="Teague B."/>
            <person name="Potamousis K."/>
            <person name="Churas C."/>
            <person name="Place M."/>
            <person name="Herschleb J."/>
            <person name="Runnheim R."/>
            <person name="Forrest D."/>
            <person name="Amos-Landgraf J."/>
            <person name="Schwartz D.C."/>
            <person name="Cheng Z."/>
            <person name="Lindblad-Toh K."/>
            <person name="Eichler E.E."/>
            <person name="Ponting C.P."/>
        </authorList>
    </citation>
    <scope>NUCLEOTIDE SEQUENCE [LARGE SCALE GENOMIC DNA]</scope>
    <source>
        <strain>C57BL/6J</strain>
    </source>
</reference>
<reference key="3">
    <citation type="submission" date="2005-07" db="EMBL/GenBank/DDBJ databases">
        <authorList>
            <person name="Mural R.J."/>
            <person name="Adams M.D."/>
            <person name="Myers E.W."/>
            <person name="Smith H.O."/>
            <person name="Venter J.C."/>
        </authorList>
    </citation>
    <scope>NUCLEOTIDE SEQUENCE [LARGE SCALE GENOMIC DNA]</scope>
</reference>
<reference key="4">
    <citation type="journal article" date="2004" name="Genome Res.">
        <title>The status, quality, and expansion of the NIH full-length cDNA project: the Mammalian Gene Collection (MGC).</title>
        <authorList>
            <consortium name="The MGC Project Team"/>
        </authorList>
    </citation>
    <scope>NUCLEOTIDE SEQUENCE [LARGE SCALE MRNA]</scope>
    <source>
        <strain>C57BL/6J</strain>
        <tissue>Brain</tissue>
        <tissue>Liver</tissue>
        <tissue>Mammary gland</tissue>
    </source>
</reference>
<reference key="5">
    <citation type="journal article" date="2010" name="Cell">
        <title>A tissue-specific atlas of mouse protein phosphorylation and expression.</title>
        <authorList>
            <person name="Huttlin E.L."/>
            <person name="Jedrychowski M.P."/>
            <person name="Elias J.E."/>
            <person name="Goswami T."/>
            <person name="Rad R."/>
            <person name="Beausoleil S.A."/>
            <person name="Villen J."/>
            <person name="Haas W."/>
            <person name="Sowa M.E."/>
            <person name="Gygi S.P."/>
        </authorList>
    </citation>
    <scope>IDENTIFICATION BY MASS SPECTROMETRY [LARGE SCALE ANALYSIS]</scope>
    <source>
        <tissue>Brain</tissue>
    </source>
</reference>
<accession>Q8VC74</accession>
<accession>A6H626</accession>
<accession>G3X965</accession>
<accession>Q3U1D5</accession>
<evidence type="ECO:0000250" key="1">
    <source>
        <dbReference type="UniProtKB" id="Q8N8Q8"/>
    </source>
</evidence>
<evidence type="ECO:0000255" key="2"/>
<evidence type="ECO:0000305" key="3"/>
<gene>
    <name type="primary">Cox18</name>
    <name type="synonym">Oxa1l2</name>
</gene>